<accession>A1R074</accession>
<evidence type="ECO:0000255" key="1">
    <source>
        <dbReference type="HAMAP-Rule" id="MF_00600"/>
    </source>
</evidence>
<dbReference type="EC" id="5.6.1.7" evidence="1"/>
<dbReference type="EMBL" id="CP000049">
    <property type="protein sequence ID" value="AAX17966.1"/>
    <property type="molecule type" value="Genomic_DNA"/>
</dbReference>
<dbReference type="RefSeq" id="WP_011772584.1">
    <property type="nucleotide sequence ID" value="NC_008710.1"/>
</dbReference>
<dbReference type="SMR" id="A1R074"/>
<dbReference type="KEGG" id="btu:BT0649"/>
<dbReference type="eggNOG" id="COG0459">
    <property type="taxonomic scope" value="Bacteria"/>
</dbReference>
<dbReference type="HOGENOM" id="CLU_016503_3_0_12"/>
<dbReference type="Proteomes" id="UP000001205">
    <property type="component" value="Chromosome"/>
</dbReference>
<dbReference type="GO" id="GO:0005737">
    <property type="term" value="C:cytoplasm"/>
    <property type="evidence" value="ECO:0007669"/>
    <property type="project" value="UniProtKB-SubCell"/>
</dbReference>
<dbReference type="GO" id="GO:0005524">
    <property type="term" value="F:ATP binding"/>
    <property type="evidence" value="ECO:0007669"/>
    <property type="project" value="UniProtKB-UniRule"/>
</dbReference>
<dbReference type="GO" id="GO:0140662">
    <property type="term" value="F:ATP-dependent protein folding chaperone"/>
    <property type="evidence" value="ECO:0007669"/>
    <property type="project" value="InterPro"/>
</dbReference>
<dbReference type="GO" id="GO:0016853">
    <property type="term" value="F:isomerase activity"/>
    <property type="evidence" value="ECO:0007669"/>
    <property type="project" value="UniProtKB-KW"/>
</dbReference>
<dbReference type="GO" id="GO:0051082">
    <property type="term" value="F:unfolded protein binding"/>
    <property type="evidence" value="ECO:0007669"/>
    <property type="project" value="UniProtKB-UniRule"/>
</dbReference>
<dbReference type="GO" id="GO:0042026">
    <property type="term" value="P:protein refolding"/>
    <property type="evidence" value="ECO:0007669"/>
    <property type="project" value="UniProtKB-UniRule"/>
</dbReference>
<dbReference type="CDD" id="cd03344">
    <property type="entry name" value="GroEL"/>
    <property type="match status" value="1"/>
</dbReference>
<dbReference type="FunFam" id="3.50.7.10:FF:000001">
    <property type="entry name" value="60 kDa chaperonin"/>
    <property type="match status" value="1"/>
</dbReference>
<dbReference type="Gene3D" id="3.50.7.10">
    <property type="entry name" value="GroEL"/>
    <property type="match status" value="1"/>
</dbReference>
<dbReference type="Gene3D" id="1.10.560.10">
    <property type="entry name" value="GroEL-like equatorial domain"/>
    <property type="match status" value="1"/>
</dbReference>
<dbReference type="Gene3D" id="3.30.260.10">
    <property type="entry name" value="TCP-1-like chaperonin intermediate domain"/>
    <property type="match status" value="1"/>
</dbReference>
<dbReference type="HAMAP" id="MF_00600">
    <property type="entry name" value="CH60"/>
    <property type="match status" value="1"/>
</dbReference>
<dbReference type="InterPro" id="IPR018370">
    <property type="entry name" value="Chaperonin_Cpn60_CS"/>
</dbReference>
<dbReference type="InterPro" id="IPR001844">
    <property type="entry name" value="Cpn60/GroEL"/>
</dbReference>
<dbReference type="InterPro" id="IPR002423">
    <property type="entry name" value="Cpn60/GroEL/TCP-1"/>
</dbReference>
<dbReference type="InterPro" id="IPR027409">
    <property type="entry name" value="GroEL-like_apical_dom_sf"/>
</dbReference>
<dbReference type="InterPro" id="IPR027413">
    <property type="entry name" value="GROEL-like_equatorial_sf"/>
</dbReference>
<dbReference type="InterPro" id="IPR027410">
    <property type="entry name" value="TCP-1-like_intermed_sf"/>
</dbReference>
<dbReference type="NCBIfam" id="TIGR02348">
    <property type="entry name" value="GroEL"/>
    <property type="match status" value="1"/>
</dbReference>
<dbReference type="NCBIfam" id="NF000592">
    <property type="entry name" value="PRK00013.1"/>
    <property type="match status" value="1"/>
</dbReference>
<dbReference type="NCBIfam" id="NF009487">
    <property type="entry name" value="PRK12849.1"/>
    <property type="match status" value="1"/>
</dbReference>
<dbReference type="NCBIfam" id="NF009488">
    <property type="entry name" value="PRK12850.1"/>
    <property type="match status" value="1"/>
</dbReference>
<dbReference type="NCBIfam" id="NF009489">
    <property type="entry name" value="PRK12851.1"/>
    <property type="match status" value="1"/>
</dbReference>
<dbReference type="PANTHER" id="PTHR45633">
    <property type="entry name" value="60 KDA HEAT SHOCK PROTEIN, MITOCHONDRIAL"/>
    <property type="match status" value="1"/>
</dbReference>
<dbReference type="Pfam" id="PF00118">
    <property type="entry name" value="Cpn60_TCP1"/>
    <property type="match status" value="1"/>
</dbReference>
<dbReference type="PRINTS" id="PR00298">
    <property type="entry name" value="CHAPERONIN60"/>
</dbReference>
<dbReference type="SUPFAM" id="SSF52029">
    <property type="entry name" value="GroEL apical domain-like"/>
    <property type="match status" value="1"/>
</dbReference>
<dbReference type="SUPFAM" id="SSF48592">
    <property type="entry name" value="GroEL equatorial domain-like"/>
    <property type="match status" value="1"/>
</dbReference>
<dbReference type="SUPFAM" id="SSF54849">
    <property type="entry name" value="GroEL-intermediate domain like"/>
    <property type="match status" value="1"/>
</dbReference>
<dbReference type="PROSITE" id="PS00296">
    <property type="entry name" value="CHAPERONINS_CPN60"/>
    <property type="match status" value="1"/>
</dbReference>
<proteinExistence type="inferred from homology"/>
<gene>
    <name evidence="1" type="primary">groEL</name>
    <name evidence="1" type="synonym">groL</name>
    <name type="ordered locus">BT0649</name>
</gene>
<keyword id="KW-0067">ATP-binding</keyword>
<keyword id="KW-0143">Chaperone</keyword>
<keyword id="KW-0963">Cytoplasm</keyword>
<keyword id="KW-0413">Isomerase</keyword>
<keyword id="KW-0547">Nucleotide-binding</keyword>
<keyword id="KW-1185">Reference proteome</keyword>
<feature type="chain" id="PRO_1000147019" description="Chaperonin GroEL">
    <location>
        <begin position="1"/>
        <end position="544"/>
    </location>
</feature>
<feature type="binding site" evidence="1">
    <location>
        <begin position="29"/>
        <end position="32"/>
    </location>
    <ligand>
        <name>ATP</name>
        <dbReference type="ChEBI" id="CHEBI:30616"/>
    </ligand>
</feature>
<feature type="binding site" evidence="1">
    <location>
        <position position="50"/>
    </location>
    <ligand>
        <name>ATP</name>
        <dbReference type="ChEBI" id="CHEBI:30616"/>
    </ligand>
</feature>
<feature type="binding site" evidence="1">
    <location>
        <begin position="86"/>
        <end position="90"/>
    </location>
    <ligand>
        <name>ATP</name>
        <dbReference type="ChEBI" id="CHEBI:30616"/>
    </ligand>
</feature>
<feature type="binding site" evidence="1">
    <location>
        <position position="413"/>
    </location>
    <ligand>
        <name>ATP</name>
        <dbReference type="ChEBI" id="CHEBI:30616"/>
    </ligand>
</feature>
<feature type="binding site" evidence="1">
    <location>
        <begin position="479"/>
        <end position="481"/>
    </location>
    <ligand>
        <name>ATP</name>
        <dbReference type="ChEBI" id="CHEBI:30616"/>
    </ligand>
</feature>
<feature type="binding site" evidence="1">
    <location>
        <position position="495"/>
    </location>
    <ligand>
        <name>ATP</name>
        <dbReference type="ChEBI" id="CHEBI:30616"/>
    </ligand>
</feature>
<protein>
    <recommendedName>
        <fullName evidence="1">Chaperonin GroEL</fullName>
        <ecNumber evidence="1">5.6.1.7</ecNumber>
    </recommendedName>
    <alternativeName>
        <fullName evidence="1">60 kDa chaperonin</fullName>
    </alternativeName>
    <alternativeName>
        <fullName evidence="1">Chaperonin-60</fullName>
        <shortName evidence="1">Cpn60</shortName>
    </alternativeName>
</protein>
<name>CH60_BORT9</name>
<reference key="1">
    <citation type="submission" date="2004-12" db="EMBL/GenBank/DDBJ databases">
        <title>The genome sequence of Borrelia hermsii and Borrelia turicatae: comparative analysis of two agents of endemic N. America relapsing fever.</title>
        <authorList>
            <person name="Porcella S.F."/>
            <person name="Raffel S.J."/>
            <person name="Schrumpf M.E."/>
            <person name="Montgomery B."/>
            <person name="Smith T."/>
            <person name="Schwan T.G."/>
        </authorList>
    </citation>
    <scope>NUCLEOTIDE SEQUENCE [LARGE SCALE GENOMIC DNA]</scope>
    <source>
        <strain>91E135</strain>
    </source>
</reference>
<organism>
    <name type="scientific">Borrelia turicatae (strain 91E135)</name>
    <dbReference type="NCBI Taxonomy" id="314724"/>
    <lineage>
        <taxon>Bacteria</taxon>
        <taxon>Pseudomonadati</taxon>
        <taxon>Spirochaetota</taxon>
        <taxon>Spirochaetia</taxon>
        <taxon>Spirochaetales</taxon>
        <taxon>Borreliaceae</taxon>
        <taxon>Borrelia</taxon>
    </lineage>
</organism>
<sequence>MAKDIYFNEDARKSLLSGIEKLSNAVKVTLGPKGRNVLIDKKFGSPTVTKDGVSVAREIELDNALENMGAQLLKEVAIKTNDLAGDGTTTATVLAYAIAREGLKNVSSGINPIGIKKGIEHAVTLASEKIRKSAKKITTKEEIAQVASISANNDTSIGEKIAEAMDRVGKDGVITVEESKTFDTTISYVEGMQFDRGYLSPYFSTNKENMSVSFDDAYILICEKKISTIKELLPVLEKVLNTNKPLLIIAEDIEGDALAALVLNSVRGALKVCAIKAPGFGDRRKAMLEDIAILTGGVFVSEELGLTLENVELEQLGQAKSVKVDKDNTTIINTGNKEQIKERAELIKKQIEETSSEYDKEKLQERLAKLVGGVAVINVGAVTELELKEKKHRVEDALSATRAAVEEGVVPGGGSTLIEVAMYLDTVDTSKLSYEEKQGFEIVKRSLEEPMRQIIANAGFESSIYIHQIKTDKKGLGFDAASFKWVNMIESGIIDPAKVTRSALQNAASIAGLLLTTECAITEVKEEKSNAGGGYPMDPGMGMM</sequence>
<comment type="function">
    <text evidence="1">Together with its co-chaperonin GroES, plays an essential role in assisting protein folding. The GroEL-GroES system forms a nano-cage that allows encapsulation of the non-native substrate proteins and provides a physical environment optimized to promote and accelerate protein folding.</text>
</comment>
<comment type="catalytic activity">
    <reaction evidence="1">
        <text>ATP + H2O + a folded polypeptide = ADP + phosphate + an unfolded polypeptide.</text>
        <dbReference type="EC" id="5.6.1.7"/>
    </reaction>
</comment>
<comment type="subunit">
    <text evidence="1">Forms a cylinder of 14 subunits composed of two heptameric rings stacked back-to-back. Interacts with the co-chaperonin GroES.</text>
</comment>
<comment type="subcellular location">
    <subcellularLocation>
        <location evidence="1">Cytoplasm</location>
    </subcellularLocation>
</comment>
<comment type="similarity">
    <text evidence="1">Belongs to the chaperonin (HSP60) family.</text>
</comment>